<dbReference type="EMBL" id="BX897699">
    <property type="protein sequence ID" value="CAF27337.1"/>
    <property type="molecule type" value="Genomic_DNA"/>
</dbReference>
<dbReference type="RefSeq" id="WP_011180459.1">
    <property type="nucleotide sequence ID" value="NZ_LRIJ02000001.1"/>
</dbReference>
<dbReference type="SMR" id="Q6G449"/>
<dbReference type="PaxDb" id="283166-BH05290"/>
<dbReference type="EnsemblBacteria" id="CAF27337">
    <property type="protein sequence ID" value="CAF27337"/>
    <property type="gene ID" value="BH05290"/>
</dbReference>
<dbReference type="GeneID" id="92985185"/>
<dbReference type="KEGG" id="bhe:BH05290"/>
<dbReference type="eggNOG" id="COG0359">
    <property type="taxonomic scope" value="Bacteria"/>
</dbReference>
<dbReference type="OrthoDB" id="9788336at2"/>
<dbReference type="Proteomes" id="UP000000421">
    <property type="component" value="Chromosome"/>
</dbReference>
<dbReference type="GO" id="GO:1990904">
    <property type="term" value="C:ribonucleoprotein complex"/>
    <property type="evidence" value="ECO:0007669"/>
    <property type="project" value="UniProtKB-KW"/>
</dbReference>
<dbReference type="GO" id="GO:0005840">
    <property type="term" value="C:ribosome"/>
    <property type="evidence" value="ECO:0007669"/>
    <property type="project" value="UniProtKB-KW"/>
</dbReference>
<dbReference type="GO" id="GO:0019843">
    <property type="term" value="F:rRNA binding"/>
    <property type="evidence" value="ECO:0007669"/>
    <property type="project" value="UniProtKB-UniRule"/>
</dbReference>
<dbReference type="GO" id="GO:0003735">
    <property type="term" value="F:structural constituent of ribosome"/>
    <property type="evidence" value="ECO:0007669"/>
    <property type="project" value="InterPro"/>
</dbReference>
<dbReference type="GO" id="GO:0006412">
    <property type="term" value="P:translation"/>
    <property type="evidence" value="ECO:0007669"/>
    <property type="project" value="UniProtKB-UniRule"/>
</dbReference>
<dbReference type="Gene3D" id="3.10.430.100">
    <property type="entry name" value="Ribosomal protein L9, C-terminal domain"/>
    <property type="match status" value="1"/>
</dbReference>
<dbReference type="Gene3D" id="3.40.5.10">
    <property type="entry name" value="Ribosomal protein L9, N-terminal domain"/>
    <property type="match status" value="1"/>
</dbReference>
<dbReference type="HAMAP" id="MF_00503">
    <property type="entry name" value="Ribosomal_bL9"/>
    <property type="match status" value="1"/>
</dbReference>
<dbReference type="InterPro" id="IPR000244">
    <property type="entry name" value="Ribosomal_bL9"/>
</dbReference>
<dbReference type="InterPro" id="IPR009027">
    <property type="entry name" value="Ribosomal_bL9/RNase_H1_N"/>
</dbReference>
<dbReference type="InterPro" id="IPR020594">
    <property type="entry name" value="Ribosomal_bL9_bac/chp"/>
</dbReference>
<dbReference type="InterPro" id="IPR020069">
    <property type="entry name" value="Ribosomal_bL9_C"/>
</dbReference>
<dbReference type="InterPro" id="IPR036791">
    <property type="entry name" value="Ribosomal_bL9_C_sf"/>
</dbReference>
<dbReference type="InterPro" id="IPR020070">
    <property type="entry name" value="Ribosomal_bL9_N"/>
</dbReference>
<dbReference type="InterPro" id="IPR036935">
    <property type="entry name" value="Ribosomal_bL9_N_sf"/>
</dbReference>
<dbReference type="NCBIfam" id="TIGR00158">
    <property type="entry name" value="L9"/>
    <property type="match status" value="1"/>
</dbReference>
<dbReference type="PANTHER" id="PTHR21368">
    <property type="entry name" value="50S RIBOSOMAL PROTEIN L9"/>
    <property type="match status" value="1"/>
</dbReference>
<dbReference type="Pfam" id="PF03948">
    <property type="entry name" value="Ribosomal_L9_C"/>
    <property type="match status" value="1"/>
</dbReference>
<dbReference type="Pfam" id="PF01281">
    <property type="entry name" value="Ribosomal_L9_N"/>
    <property type="match status" value="1"/>
</dbReference>
<dbReference type="SUPFAM" id="SSF55658">
    <property type="entry name" value="L9 N-domain-like"/>
    <property type="match status" value="1"/>
</dbReference>
<dbReference type="SUPFAM" id="SSF55653">
    <property type="entry name" value="Ribosomal protein L9 C-domain"/>
    <property type="match status" value="1"/>
</dbReference>
<dbReference type="PROSITE" id="PS00651">
    <property type="entry name" value="RIBOSOMAL_L9"/>
    <property type="match status" value="1"/>
</dbReference>
<protein>
    <recommendedName>
        <fullName evidence="1">Large ribosomal subunit protein bL9</fullName>
    </recommendedName>
    <alternativeName>
        <fullName evidence="3">50S ribosomal protein L9</fullName>
    </alternativeName>
</protein>
<evidence type="ECO:0000255" key="1">
    <source>
        <dbReference type="HAMAP-Rule" id="MF_00503"/>
    </source>
</evidence>
<evidence type="ECO:0000256" key="2">
    <source>
        <dbReference type="SAM" id="MobiDB-lite"/>
    </source>
</evidence>
<evidence type="ECO:0000305" key="3"/>
<comment type="function">
    <text evidence="1">Binds to the 23S rRNA.</text>
</comment>
<comment type="similarity">
    <text evidence="1">Belongs to the bacterial ribosomal protein bL9 family.</text>
</comment>
<keyword id="KW-0687">Ribonucleoprotein</keyword>
<keyword id="KW-0689">Ribosomal protein</keyword>
<keyword id="KW-0694">RNA-binding</keyword>
<keyword id="KW-0699">rRNA-binding</keyword>
<accession>Q6G449</accession>
<gene>
    <name evidence="1" type="primary">rplI</name>
    <name type="ordered locus">BH05290</name>
</gene>
<organism>
    <name type="scientific">Bartonella henselae (strain ATCC 49882 / DSM 28221 / CCUG 30454 / Houston 1)</name>
    <name type="common">Rochalimaea henselae</name>
    <dbReference type="NCBI Taxonomy" id="283166"/>
    <lineage>
        <taxon>Bacteria</taxon>
        <taxon>Pseudomonadati</taxon>
        <taxon>Pseudomonadota</taxon>
        <taxon>Alphaproteobacteria</taxon>
        <taxon>Hyphomicrobiales</taxon>
        <taxon>Bartonellaceae</taxon>
        <taxon>Bartonella</taxon>
    </lineage>
</organism>
<feature type="chain" id="PRO_0000236483" description="Large ribosomal subunit protein bL9">
    <location>
        <begin position="1"/>
        <end position="206"/>
    </location>
</feature>
<feature type="region of interest" description="Disordered" evidence="2">
    <location>
        <begin position="182"/>
        <end position="206"/>
    </location>
</feature>
<feature type="compositionally biased region" description="Polar residues" evidence="2">
    <location>
        <begin position="197"/>
        <end position="206"/>
    </location>
</feature>
<sequence length="206" mass="22914">MDIILLERIPRLGQMGDIVSVKDGYARNFLLPQGKALRANEANKKHFEIQRAQLEARNLERKSEAEKIAEKLDGKSFIVVRSAGETGQLYGSVSTRDISEIITSEGFSIGRNQVELNHPIKTIGLHTIMLSLHPEVQISVIINVARSASEAQRQAEGETLTSAEAIYDVRKELLAENQEETFAENQQKALAKEMNDNDANSINEEA</sequence>
<name>RL9_BARHE</name>
<proteinExistence type="inferred from homology"/>
<reference key="1">
    <citation type="journal article" date="2004" name="Proc. Natl. Acad. Sci. U.S.A.">
        <title>The louse-borne human pathogen Bartonella quintana is a genomic derivative of the zoonotic agent Bartonella henselae.</title>
        <authorList>
            <person name="Alsmark U.C.M."/>
            <person name="Frank A.C."/>
            <person name="Karlberg E.O."/>
            <person name="Legault B.-A."/>
            <person name="Ardell D.H."/>
            <person name="Canbaeck B."/>
            <person name="Eriksson A.-S."/>
            <person name="Naeslund A.K."/>
            <person name="Handley S.A."/>
            <person name="Huvet M."/>
            <person name="La Scola B."/>
            <person name="Holmberg M."/>
            <person name="Andersson S.G.E."/>
        </authorList>
    </citation>
    <scope>NUCLEOTIDE SEQUENCE [LARGE SCALE GENOMIC DNA]</scope>
    <source>
        <strain>ATCC 49882 / DSM 28221 / CCUG 30454 / Houston 1</strain>
    </source>
</reference>